<comment type="function">
    <text evidence="2">Probably reversibly hydrates carbon dioxide.</text>
</comment>
<comment type="catalytic activity">
    <reaction evidence="1">
        <text>hydrogencarbonate + H(+) = CO2 + H2O</text>
        <dbReference type="Rhea" id="RHEA:10748"/>
        <dbReference type="ChEBI" id="CHEBI:15377"/>
        <dbReference type="ChEBI" id="CHEBI:15378"/>
        <dbReference type="ChEBI" id="CHEBI:16526"/>
        <dbReference type="ChEBI" id="CHEBI:17544"/>
        <dbReference type="EC" id="4.2.1.1"/>
    </reaction>
</comment>
<comment type="cofactor">
    <cofactor evidence="1">
        <name>Zn(2+)</name>
        <dbReference type="ChEBI" id="CHEBI:29105"/>
    </cofactor>
</comment>
<comment type="similarity">
    <text evidence="2">Belongs to the gamma-class carbonic anhydrase family.</text>
</comment>
<accession>Q57752</accession>
<dbReference type="EC" id="4.2.1.1" evidence="1"/>
<dbReference type="EMBL" id="L77117">
    <property type="protein sequence ID" value="AAB98291.1"/>
    <property type="molecule type" value="Genomic_DNA"/>
</dbReference>
<dbReference type="PIR" id="A64338">
    <property type="entry name" value="A64338"/>
</dbReference>
<dbReference type="RefSeq" id="WP_010869802.1">
    <property type="nucleotide sequence ID" value="NC_000909.1"/>
</dbReference>
<dbReference type="SMR" id="Q57752"/>
<dbReference type="FunCoup" id="Q57752">
    <property type="interactions" value="124"/>
</dbReference>
<dbReference type="STRING" id="243232.MJ_0304"/>
<dbReference type="PaxDb" id="243232-MJ_0304"/>
<dbReference type="EnsemblBacteria" id="AAB98291">
    <property type="protein sequence ID" value="AAB98291"/>
    <property type="gene ID" value="MJ_0304"/>
</dbReference>
<dbReference type="GeneID" id="1451159"/>
<dbReference type="KEGG" id="mja:MJ_0304"/>
<dbReference type="eggNOG" id="arCOG01849">
    <property type="taxonomic scope" value="Archaea"/>
</dbReference>
<dbReference type="HOGENOM" id="CLU_064827_4_1_2"/>
<dbReference type="InParanoid" id="Q57752"/>
<dbReference type="OrthoDB" id="10940at2157"/>
<dbReference type="PhylomeDB" id="Q57752"/>
<dbReference type="Proteomes" id="UP000000805">
    <property type="component" value="Chromosome"/>
</dbReference>
<dbReference type="GO" id="GO:0016829">
    <property type="term" value="F:lyase activity"/>
    <property type="evidence" value="ECO:0007669"/>
    <property type="project" value="UniProtKB-KW"/>
</dbReference>
<dbReference type="GO" id="GO:0046872">
    <property type="term" value="F:metal ion binding"/>
    <property type="evidence" value="ECO:0007669"/>
    <property type="project" value="UniProtKB-KW"/>
</dbReference>
<dbReference type="CDD" id="cd04645">
    <property type="entry name" value="LbH_gamma_CA_like"/>
    <property type="match status" value="1"/>
</dbReference>
<dbReference type="Gene3D" id="2.160.10.10">
    <property type="entry name" value="Hexapeptide repeat proteins"/>
    <property type="match status" value="1"/>
</dbReference>
<dbReference type="InterPro" id="IPR001451">
    <property type="entry name" value="Hexapep"/>
</dbReference>
<dbReference type="InterPro" id="IPR047324">
    <property type="entry name" value="LbH_gamma_CA-like"/>
</dbReference>
<dbReference type="InterPro" id="IPR050484">
    <property type="entry name" value="Transf_Hexapept/Carb_Anhydrase"/>
</dbReference>
<dbReference type="InterPro" id="IPR011004">
    <property type="entry name" value="Trimer_LpxA-like_sf"/>
</dbReference>
<dbReference type="PANTHER" id="PTHR13061">
    <property type="entry name" value="DYNACTIN SUBUNIT P25"/>
    <property type="match status" value="1"/>
</dbReference>
<dbReference type="PANTHER" id="PTHR13061:SF29">
    <property type="entry name" value="GAMMA CARBONIC ANHYDRASE-LIKE 1, MITOCHONDRIAL-RELATED"/>
    <property type="match status" value="1"/>
</dbReference>
<dbReference type="Pfam" id="PF00132">
    <property type="entry name" value="Hexapep"/>
    <property type="match status" value="2"/>
</dbReference>
<dbReference type="SUPFAM" id="SSF51161">
    <property type="entry name" value="Trimeric LpxA-like enzymes"/>
    <property type="match status" value="1"/>
</dbReference>
<protein>
    <recommendedName>
        <fullName evidence="2">Probable carbonic anhydrase</fullName>
        <shortName>CA</shortName>
        <ecNumber evidence="1">4.2.1.1</ecNumber>
    </recommendedName>
</protein>
<evidence type="ECO:0000250" key="1">
    <source>
        <dbReference type="UniProtKB" id="P40881"/>
    </source>
</evidence>
<evidence type="ECO:0000305" key="2"/>
<sequence length="159" mass="17174">MISKNVRIAKGAVIVGDVTIGDYSSVWYNAVIRGDVDKIIIGNYSNIQDCCVVHCSKGYPTIIGDYVSIGHGAVIHGCRIEDNVLVGMNATILNGAKIGENCIIGANALVTQNKEIPPNSLVLGVPGRVVRELTEEEIKSIKENALRYVKLSETLESYK</sequence>
<organism>
    <name type="scientific">Methanocaldococcus jannaschii (strain ATCC 43067 / DSM 2661 / JAL-1 / JCM 10045 / NBRC 100440)</name>
    <name type="common">Methanococcus jannaschii</name>
    <dbReference type="NCBI Taxonomy" id="243232"/>
    <lineage>
        <taxon>Archaea</taxon>
        <taxon>Methanobacteriati</taxon>
        <taxon>Methanobacteriota</taxon>
        <taxon>Methanomada group</taxon>
        <taxon>Methanococci</taxon>
        <taxon>Methanococcales</taxon>
        <taxon>Methanocaldococcaceae</taxon>
        <taxon>Methanocaldococcus</taxon>
    </lineage>
</organism>
<keyword id="KW-0456">Lyase</keyword>
<keyword id="KW-0479">Metal-binding</keyword>
<keyword id="KW-1185">Reference proteome</keyword>
<keyword id="KW-0862">Zinc</keyword>
<gene>
    <name type="ordered locus">MJ0304</name>
</gene>
<reference key="1">
    <citation type="journal article" date="1996" name="Science">
        <title>Complete genome sequence of the methanogenic archaeon, Methanococcus jannaschii.</title>
        <authorList>
            <person name="Bult C.J."/>
            <person name="White O."/>
            <person name="Olsen G.J."/>
            <person name="Zhou L."/>
            <person name="Fleischmann R.D."/>
            <person name="Sutton G.G."/>
            <person name="Blake J.A."/>
            <person name="FitzGerald L.M."/>
            <person name="Clayton R.A."/>
            <person name="Gocayne J.D."/>
            <person name="Kerlavage A.R."/>
            <person name="Dougherty B.A."/>
            <person name="Tomb J.-F."/>
            <person name="Adams M.D."/>
            <person name="Reich C.I."/>
            <person name="Overbeek R."/>
            <person name="Kirkness E.F."/>
            <person name="Weinstock K.G."/>
            <person name="Merrick J.M."/>
            <person name="Glodek A."/>
            <person name="Scott J.L."/>
            <person name="Geoghagen N.S.M."/>
            <person name="Weidman J.F."/>
            <person name="Fuhrmann J.L."/>
            <person name="Nguyen D."/>
            <person name="Utterback T.R."/>
            <person name="Kelley J.M."/>
            <person name="Peterson J.D."/>
            <person name="Sadow P.W."/>
            <person name="Hanna M.C."/>
            <person name="Cotton M.D."/>
            <person name="Roberts K.M."/>
            <person name="Hurst M.A."/>
            <person name="Kaine B.P."/>
            <person name="Borodovsky M."/>
            <person name="Klenk H.-P."/>
            <person name="Fraser C.M."/>
            <person name="Smith H.O."/>
            <person name="Woese C.R."/>
            <person name="Venter J.C."/>
        </authorList>
    </citation>
    <scope>NUCLEOTIDE SEQUENCE [LARGE SCALE GENOMIC DNA]</scope>
    <source>
        <strain>ATCC 43067 / DSM 2661 / JAL-1 / JCM 10045 / NBRC 100440</strain>
    </source>
</reference>
<proteinExistence type="inferred from homology"/>
<feature type="chain" id="PRO_0000077472" description="Probable carbonic anhydrase">
    <location>
        <begin position="1"/>
        <end position="159"/>
    </location>
</feature>
<feature type="binding site" evidence="1">
    <location>
        <begin position="33"/>
        <end position="35"/>
    </location>
    <ligand>
        <name>substrate</name>
    </ligand>
</feature>
<feature type="binding site" evidence="1">
    <location>
        <begin position="48"/>
        <end position="49"/>
    </location>
    <ligand>
        <name>substrate</name>
    </ligand>
</feature>
<feature type="binding site" evidence="1">
    <location>
        <position position="54"/>
    </location>
    <ligand>
        <name>Zn(2+)</name>
        <dbReference type="ChEBI" id="CHEBI:29105"/>
    </ligand>
</feature>
<feature type="binding site" evidence="1">
    <location>
        <position position="71"/>
    </location>
    <ligand>
        <name>Zn(2+)</name>
        <dbReference type="ChEBI" id="CHEBI:29105"/>
    </ligand>
</feature>
<feature type="binding site" evidence="1">
    <location>
        <position position="76"/>
    </location>
    <ligand>
        <name>Zn(2+)</name>
        <dbReference type="ChEBI" id="CHEBI:29105"/>
    </ligand>
</feature>
<name>CAH_METJA</name>